<comment type="function">
    <text evidence="1">Catalyzes the reversible interconversion of serine and glycine with tetrahydrofolate (THF) serving as the one-carbon carrier. This reaction serves as the major source of one-carbon groups required for the biosynthesis of purines, thymidylate, methionine, and other important biomolecules. Also exhibits THF-independent aldolase activity toward beta-hydroxyamino acids, producing glycine and aldehydes, via a retro-aldol mechanism.</text>
</comment>
<comment type="catalytic activity">
    <reaction evidence="1">
        <text>(6R)-5,10-methylene-5,6,7,8-tetrahydrofolate + glycine + H2O = (6S)-5,6,7,8-tetrahydrofolate + L-serine</text>
        <dbReference type="Rhea" id="RHEA:15481"/>
        <dbReference type="ChEBI" id="CHEBI:15377"/>
        <dbReference type="ChEBI" id="CHEBI:15636"/>
        <dbReference type="ChEBI" id="CHEBI:33384"/>
        <dbReference type="ChEBI" id="CHEBI:57305"/>
        <dbReference type="ChEBI" id="CHEBI:57453"/>
        <dbReference type="EC" id="2.1.2.1"/>
    </reaction>
</comment>
<comment type="cofactor">
    <cofactor evidence="1">
        <name>pyridoxal 5'-phosphate</name>
        <dbReference type="ChEBI" id="CHEBI:597326"/>
    </cofactor>
</comment>
<comment type="pathway">
    <text evidence="1">One-carbon metabolism; tetrahydrofolate interconversion.</text>
</comment>
<comment type="pathway">
    <text evidence="1">Amino-acid biosynthesis; glycine biosynthesis; glycine from L-serine: step 1/1.</text>
</comment>
<comment type="subunit">
    <text evidence="1">Homodimer.</text>
</comment>
<comment type="subcellular location">
    <subcellularLocation>
        <location evidence="1">Cytoplasm</location>
    </subcellularLocation>
</comment>
<comment type="similarity">
    <text evidence="1">Belongs to the SHMT family.</text>
</comment>
<organism>
    <name type="scientific">Rickettsia conorii (strain ATCC VR-613 / Malish 7)</name>
    <dbReference type="NCBI Taxonomy" id="272944"/>
    <lineage>
        <taxon>Bacteria</taxon>
        <taxon>Pseudomonadati</taxon>
        <taxon>Pseudomonadota</taxon>
        <taxon>Alphaproteobacteria</taxon>
        <taxon>Rickettsiales</taxon>
        <taxon>Rickettsiaceae</taxon>
        <taxon>Rickettsieae</taxon>
        <taxon>Rickettsia</taxon>
        <taxon>spotted fever group</taxon>
    </lineage>
</organism>
<feature type="chain" id="PRO_0000113653" description="Serine hydroxymethyltransferase">
    <location>
        <begin position="1"/>
        <end position="420"/>
    </location>
</feature>
<feature type="binding site" evidence="1">
    <location>
        <position position="121"/>
    </location>
    <ligand>
        <name>(6S)-5,6,7,8-tetrahydrofolate</name>
        <dbReference type="ChEBI" id="CHEBI:57453"/>
    </ligand>
</feature>
<feature type="binding site" evidence="1">
    <location>
        <begin position="125"/>
        <end position="127"/>
    </location>
    <ligand>
        <name>(6S)-5,6,7,8-tetrahydrofolate</name>
        <dbReference type="ChEBI" id="CHEBI:57453"/>
    </ligand>
</feature>
<feature type="binding site" evidence="1">
    <location>
        <begin position="354"/>
        <end position="356"/>
    </location>
    <ligand>
        <name>(6S)-5,6,7,8-tetrahydrofolate</name>
        <dbReference type="ChEBI" id="CHEBI:57453"/>
    </ligand>
</feature>
<feature type="site" description="Plays an important role in substrate specificity" evidence="1">
    <location>
        <position position="229"/>
    </location>
</feature>
<feature type="modified residue" description="N6-(pyridoxal phosphate)lysine" evidence="1">
    <location>
        <position position="230"/>
    </location>
</feature>
<name>GLYA_RICCN</name>
<reference key="1">
    <citation type="journal article" date="2001" name="Science">
        <title>Mechanisms of evolution in Rickettsia conorii and R. prowazekii.</title>
        <authorList>
            <person name="Ogata H."/>
            <person name="Audic S."/>
            <person name="Renesto-Audiffren P."/>
            <person name="Fournier P.-E."/>
            <person name="Barbe V."/>
            <person name="Samson D."/>
            <person name="Roux V."/>
            <person name="Cossart P."/>
            <person name="Weissenbach J."/>
            <person name="Claverie J.-M."/>
            <person name="Raoult D."/>
        </authorList>
    </citation>
    <scope>NUCLEOTIDE SEQUENCE [LARGE SCALE GENOMIC DNA]</scope>
    <source>
        <strain>ATCC VR-613 / Malish 7</strain>
    </source>
</reference>
<protein>
    <recommendedName>
        <fullName evidence="1">Serine hydroxymethyltransferase</fullName>
        <shortName evidence="1">SHMT</shortName>
        <shortName evidence="1">Serine methylase</shortName>
        <ecNumber evidence="1">2.1.2.1</ecNumber>
    </recommendedName>
</protein>
<keyword id="KW-0028">Amino-acid biosynthesis</keyword>
<keyword id="KW-0963">Cytoplasm</keyword>
<keyword id="KW-0554">One-carbon metabolism</keyword>
<keyword id="KW-0663">Pyridoxal phosphate</keyword>
<keyword id="KW-0808">Transferase</keyword>
<accession>Q92GH7</accession>
<proteinExistence type="inferred from homology"/>
<evidence type="ECO:0000255" key="1">
    <source>
        <dbReference type="HAMAP-Rule" id="MF_00051"/>
    </source>
</evidence>
<gene>
    <name evidence="1" type="primary">glyA</name>
    <name type="ordered locus">RC1146</name>
</gene>
<dbReference type="EC" id="2.1.2.1" evidence="1"/>
<dbReference type="EMBL" id="AE006914">
    <property type="protein sequence ID" value="AAL03684.1"/>
    <property type="molecule type" value="Genomic_DNA"/>
</dbReference>
<dbReference type="PIR" id="B97843">
    <property type="entry name" value="B97843"/>
</dbReference>
<dbReference type="RefSeq" id="WP_010977717.1">
    <property type="nucleotide sequence ID" value="NC_003103.1"/>
</dbReference>
<dbReference type="SMR" id="Q92GH7"/>
<dbReference type="GeneID" id="928297"/>
<dbReference type="KEGG" id="rco:RC1146"/>
<dbReference type="HOGENOM" id="CLU_022477_2_1_5"/>
<dbReference type="UniPathway" id="UPA00193"/>
<dbReference type="UniPathway" id="UPA00288">
    <property type="reaction ID" value="UER01023"/>
</dbReference>
<dbReference type="Proteomes" id="UP000000816">
    <property type="component" value="Chromosome"/>
</dbReference>
<dbReference type="GO" id="GO:0005829">
    <property type="term" value="C:cytosol"/>
    <property type="evidence" value="ECO:0007669"/>
    <property type="project" value="TreeGrafter"/>
</dbReference>
<dbReference type="GO" id="GO:0004372">
    <property type="term" value="F:glycine hydroxymethyltransferase activity"/>
    <property type="evidence" value="ECO:0007669"/>
    <property type="project" value="UniProtKB-UniRule"/>
</dbReference>
<dbReference type="GO" id="GO:0030170">
    <property type="term" value="F:pyridoxal phosphate binding"/>
    <property type="evidence" value="ECO:0007669"/>
    <property type="project" value="UniProtKB-UniRule"/>
</dbReference>
<dbReference type="GO" id="GO:0019264">
    <property type="term" value="P:glycine biosynthetic process from serine"/>
    <property type="evidence" value="ECO:0007669"/>
    <property type="project" value="UniProtKB-UniRule"/>
</dbReference>
<dbReference type="GO" id="GO:0035999">
    <property type="term" value="P:tetrahydrofolate interconversion"/>
    <property type="evidence" value="ECO:0007669"/>
    <property type="project" value="UniProtKB-UniRule"/>
</dbReference>
<dbReference type="CDD" id="cd00378">
    <property type="entry name" value="SHMT"/>
    <property type="match status" value="1"/>
</dbReference>
<dbReference type="FunFam" id="3.40.640.10:FF:000001">
    <property type="entry name" value="Serine hydroxymethyltransferase"/>
    <property type="match status" value="1"/>
</dbReference>
<dbReference type="Gene3D" id="3.90.1150.10">
    <property type="entry name" value="Aspartate Aminotransferase, domain 1"/>
    <property type="match status" value="1"/>
</dbReference>
<dbReference type="Gene3D" id="3.40.640.10">
    <property type="entry name" value="Type I PLP-dependent aspartate aminotransferase-like (Major domain)"/>
    <property type="match status" value="1"/>
</dbReference>
<dbReference type="HAMAP" id="MF_00051">
    <property type="entry name" value="SHMT"/>
    <property type="match status" value="1"/>
</dbReference>
<dbReference type="InterPro" id="IPR015424">
    <property type="entry name" value="PyrdxlP-dep_Trfase"/>
</dbReference>
<dbReference type="InterPro" id="IPR015421">
    <property type="entry name" value="PyrdxlP-dep_Trfase_major"/>
</dbReference>
<dbReference type="InterPro" id="IPR015422">
    <property type="entry name" value="PyrdxlP-dep_Trfase_small"/>
</dbReference>
<dbReference type="InterPro" id="IPR001085">
    <property type="entry name" value="Ser_HO-MeTrfase"/>
</dbReference>
<dbReference type="InterPro" id="IPR049943">
    <property type="entry name" value="Ser_HO-MeTrfase-like"/>
</dbReference>
<dbReference type="InterPro" id="IPR019798">
    <property type="entry name" value="Ser_HO-MeTrfase_PLP_BS"/>
</dbReference>
<dbReference type="InterPro" id="IPR039429">
    <property type="entry name" value="SHMT-like_dom"/>
</dbReference>
<dbReference type="NCBIfam" id="NF000586">
    <property type="entry name" value="PRK00011.1"/>
    <property type="match status" value="1"/>
</dbReference>
<dbReference type="PANTHER" id="PTHR11680">
    <property type="entry name" value="SERINE HYDROXYMETHYLTRANSFERASE"/>
    <property type="match status" value="1"/>
</dbReference>
<dbReference type="PANTHER" id="PTHR11680:SF35">
    <property type="entry name" value="SERINE HYDROXYMETHYLTRANSFERASE 1"/>
    <property type="match status" value="1"/>
</dbReference>
<dbReference type="Pfam" id="PF00464">
    <property type="entry name" value="SHMT"/>
    <property type="match status" value="1"/>
</dbReference>
<dbReference type="PIRSF" id="PIRSF000412">
    <property type="entry name" value="SHMT"/>
    <property type="match status" value="1"/>
</dbReference>
<dbReference type="SUPFAM" id="SSF53383">
    <property type="entry name" value="PLP-dependent transferases"/>
    <property type="match status" value="1"/>
</dbReference>
<dbReference type="PROSITE" id="PS00096">
    <property type="entry name" value="SHMT"/>
    <property type="match status" value="1"/>
</dbReference>
<sequence>MNIFNNNLHETDKEINEIIKHEKLRQSSVIELIASENFVSPAVLEAQGALLTNKYAEGYPSKRFYNGCEEVDKAENLAIERVKKLFNCKYANVQPHSGSQANQAVYLALLQPGDTVLGMSLDSGGHLTHGAAPNMSGKWFNAVSYSVNKETYLIDYDEIERLADLHKPKLLIAGFSAYPRNIDFAKFREIVDKVGAYFMADIAHIAGLVATGEHQSPIPYAHAVTSTTHKTLRGPRGGLILSNDEAIGHKINSALFPGLQGGPLMHIIAAKAVAFLENLQPEYKSYIQQVISNAKALASSLQERGYDILTGGTDNHIVLVDLRKDGITGKLAANSLDRAGITCNKNAIPFDETSPFITSGIRLGTPACTTRGFKEKDFVLVGHMVADILDGLKNNEDNSALEQKVLNEVTKLIELFPFYG</sequence>